<name>KGUA_AROAE</name>
<gene>
    <name evidence="1" type="primary">gmk</name>
    <name type="ordered locus">AZOSEA19690</name>
    <name type="ORF">ebA3494</name>
</gene>
<evidence type="ECO:0000255" key="1">
    <source>
        <dbReference type="HAMAP-Rule" id="MF_00328"/>
    </source>
</evidence>
<evidence type="ECO:0000305" key="2"/>
<protein>
    <recommendedName>
        <fullName evidence="1">Guanylate kinase</fullName>
        <ecNumber evidence="1">2.7.4.8</ecNumber>
    </recommendedName>
    <alternativeName>
        <fullName evidence="1">GMP kinase</fullName>
    </alternativeName>
</protein>
<feature type="chain" id="PRO_0000266287" description="Guanylate kinase">
    <location>
        <begin position="1"/>
        <end position="204"/>
    </location>
</feature>
<feature type="domain" description="Guanylate kinase-like" evidence="1">
    <location>
        <begin position="3"/>
        <end position="181"/>
    </location>
</feature>
<feature type="binding site" evidence="1">
    <location>
        <begin position="10"/>
        <end position="17"/>
    </location>
    <ligand>
        <name>ATP</name>
        <dbReference type="ChEBI" id="CHEBI:30616"/>
    </ligand>
</feature>
<dbReference type="EC" id="2.7.4.8" evidence="1"/>
<dbReference type="EMBL" id="CR555306">
    <property type="protein sequence ID" value="CAI08094.1"/>
    <property type="status" value="ALT_INIT"/>
    <property type="molecule type" value="Genomic_DNA"/>
</dbReference>
<dbReference type="RefSeq" id="WP_041647120.1">
    <property type="nucleotide sequence ID" value="NC_006513.1"/>
</dbReference>
<dbReference type="SMR" id="Q5P3M0"/>
<dbReference type="STRING" id="76114.ebA3494"/>
<dbReference type="KEGG" id="eba:ebA3494"/>
<dbReference type="eggNOG" id="COG0194">
    <property type="taxonomic scope" value="Bacteria"/>
</dbReference>
<dbReference type="HOGENOM" id="CLU_001715_1_2_4"/>
<dbReference type="OrthoDB" id="9808150at2"/>
<dbReference type="Proteomes" id="UP000006552">
    <property type="component" value="Chromosome"/>
</dbReference>
<dbReference type="GO" id="GO:0005829">
    <property type="term" value="C:cytosol"/>
    <property type="evidence" value="ECO:0007669"/>
    <property type="project" value="TreeGrafter"/>
</dbReference>
<dbReference type="GO" id="GO:0005524">
    <property type="term" value="F:ATP binding"/>
    <property type="evidence" value="ECO:0007669"/>
    <property type="project" value="UniProtKB-UniRule"/>
</dbReference>
<dbReference type="GO" id="GO:0004385">
    <property type="term" value="F:guanylate kinase activity"/>
    <property type="evidence" value="ECO:0007669"/>
    <property type="project" value="UniProtKB-UniRule"/>
</dbReference>
<dbReference type="CDD" id="cd00071">
    <property type="entry name" value="GMPK"/>
    <property type="match status" value="1"/>
</dbReference>
<dbReference type="FunFam" id="3.30.63.10:FF:000002">
    <property type="entry name" value="Guanylate kinase 1"/>
    <property type="match status" value="1"/>
</dbReference>
<dbReference type="Gene3D" id="3.30.63.10">
    <property type="entry name" value="Guanylate Kinase phosphate binding domain"/>
    <property type="match status" value="1"/>
</dbReference>
<dbReference type="Gene3D" id="3.40.50.300">
    <property type="entry name" value="P-loop containing nucleotide triphosphate hydrolases"/>
    <property type="match status" value="1"/>
</dbReference>
<dbReference type="HAMAP" id="MF_00328">
    <property type="entry name" value="Guanylate_kinase"/>
    <property type="match status" value="1"/>
</dbReference>
<dbReference type="InterPro" id="IPR008145">
    <property type="entry name" value="GK/Ca_channel_bsu"/>
</dbReference>
<dbReference type="InterPro" id="IPR008144">
    <property type="entry name" value="Guanylate_kin-like_dom"/>
</dbReference>
<dbReference type="InterPro" id="IPR017665">
    <property type="entry name" value="Guanylate_kinase"/>
</dbReference>
<dbReference type="InterPro" id="IPR020590">
    <property type="entry name" value="Guanylate_kinase_CS"/>
</dbReference>
<dbReference type="InterPro" id="IPR027417">
    <property type="entry name" value="P-loop_NTPase"/>
</dbReference>
<dbReference type="NCBIfam" id="TIGR03263">
    <property type="entry name" value="guanyl_kin"/>
    <property type="match status" value="1"/>
</dbReference>
<dbReference type="PANTHER" id="PTHR23117:SF13">
    <property type="entry name" value="GUANYLATE KINASE"/>
    <property type="match status" value="1"/>
</dbReference>
<dbReference type="PANTHER" id="PTHR23117">
    <property type="entry name" value="GUANYLATE KINASE-RELATED"/>
    <property type="match status" value="1"/>
</dbReference>
<dbReference type="Pfam" id="PF00625">
    <property type="entry name" value="Guanylate_kin"/>
    <property type="match status" value="1"/>
</dbReference>
<dbReference type="SMART" id="SM00072">
    <property type="entry name" value="GuKc"/>
    <property type="match status" value="1"/>
</dbReference>
<dbReference type="SUPFAM" id="SSF52540">
    <property type="entry name" value="P-loop containing nucleoside triphosphate hydrolases"/>
    <property type="match status" value="1"/>
</dbReference>
<dbReference type="PROSITE" id="PS00856">
    <property type="entry name" value="GUANYLATE_KINASE_1"/>
    <property type="match status" value="1"/>
</dbReference>
<dbReference type="PROSITE" id="PS50052">
    <property type="entry name" value="GUANYLATE_KINASE_2"/>
    <property type="match status" value="1"/>
</dbReference>
<organism>
    <name type="scientific">Aromatoleum aromaticum (strain DSM 19018 / LMG 30748 / EbN1)</name>
    <name type="common">Azoarcus sp. (strain EbN1)</name>
    <dbReference type="NCBI Taxonomy" id="76114"/>
    <lineage>
        <taxon>Bacteria</taxon>
        <taxon>Pseudomonadati</taxon>
        <taxon>Pseudomonadota</taxon>
        <taxon>Betaproteobacteria</taxon>
        <taxon>Rhodocyclales</taxon>
        <taxon>Rhodocyclaceae</taxon>
        <taxon>Aromatoleum</taxon>
    </lineage>
</organism>
<proteinExistence type="inferred from homology"/>
<keyword id="KW-0067">ATP-binding</keyword>
<keyword id="KW-0963">Cytoplasm</keyword>
<keyword id="KW-0418">Kinase</keyword>
<keyword id="KW-0547">Nucleotide-binding</keyword>
<keyword id="KW-1185">Reference proteome</keyword>
<keyword id="KW-0808">Transferase</keyword>
<accession>Q5P3M0</accession>
<sequence>MPGTLIIITAPSGAGKTTLVSGLLERDPQVNLSVSYTTREPRPGERDGREYHFVDVATFRALRDRGEFLEWAEVHGNYYATSKVWLKQQIATGRDILLEIDWQGAQQVRKSFPDAVGVFILPPSLEELEARLRGRGTDSDDVIMRRLLGARGEMRHVGEFDYVILNNDLQCALDDLVAVVRASRLRYANQHERHLQYFDFLEQD</sequence>
<comment type="function">
    <text evidence="1">Essential for recycling GMP and indirectly, cGMP.</text>
</comment>
<comment type="catalytic activity">
    <reaction evidence="1">
        <text>GMP + ATP = GDP + ADP</text>
        <dbReference type="Rhea" id="RHEA:20780"/>
        <dbReference type="ChEBI" id="CHEBI:30616"/>
        <dbReference type="ChEBI" id="CHEBI:58115"/>
        <dbReference type="ChEBI" id="CHEBI:58189"/>
        <dbReference type="ChEBI" id="CHEBI:456216"/>
        <dbReference type="EC" id="2.7.4.8"/>
    </reaction>
</comment>
<comment type="subcellular location">
    <subcellularLocation>
        <location evidence="1">Cytoplasm</location>
    </subcellularLocation>
</comment>
<comment type="similarity">
    <text evidence="1">Belongs to the guanylate kinase family.</text>
</comment>
<comment type="sequence caution" evidence="2">
    <conflict type="erroneous initiation">
        <sequence resource="EMBL-CDS" id="CAI08094"/>
    </conflict>
</comment>
<reference key="1">
    <citation type="journal article" date="2005" name="Arch. Microbiol.">
        <title>The genome sequence of an anaerobic aromatic-degrading denitrifying bacterium, strain EbN1.</title>
        <authorList>
            <person name="Rabus R."/>
            <person name="Kube M."/>
            <person name="Heider J."/>
            <person name="Beck A."/>
            <person name="Heitmann K."/>
            <person name="Widdel F."/>
            <person name="Reinhardt R."/>
        </authorList>
    </citation>
    <scope>NUCLEOTIDE SEQUENCE [LARGE SCALE GENOMIC DNA]</scope>
    <source>
        <strain>DSM 19018 / LMG 30748 / EbN1</strain>
    </source>
</reference>